<protein>
    <recommendedName>
        <fullName>Vam6-like protein</fullName>
    </recommendedName>
</protein>
<proteinExistence type="evidence at protein level"/>
<organism evidence="3">
    <name type="scientific">Mus musculus</name>
    <name type="common">Mouse</name>
    <dbReference type="NCBI Taxonomy" id="10090"/>
    <lineage>
        <taxon>Eukaryota</taxon>
        <taxon>Metazoa</taxon>
        <taxon>Chordata</taxon>
        <taxon>Craniata</taxon>
        <taxon>Vertebrata</taxon>
        <taxon>Euteleostomi</taxon>
        <taxon>Mammalia</taxon>
        <taxon>Eutheria</taxon>
        <taxon>Euarchontoglires</taxon>
        <taxon>Glires</taxon>
        <taxon>Rodentia</taxon>
        <taxon>Myomorpha</taxon>
        <taxon>Muroidea</taxon>
        <taxon>Muridae</taxon>
        <taxon>Murinae</taxon>
        <taxon>Mus</taxon>
        <taxon>Mus</taxon>
    </lineage>
</organism>
<accession>P83853</accession>
<name>VAM6L_MOUSE</name>
<evidence type="ECO:0000250" key="1"/>
<evidence type="ECO:0000250" key="2">
    <source>
        <dbReference type="UniProtKB" id="Q96JC1"/>
    </source>
</evidence>
<evidence type="ECO:0000305" key="3"/>
<reference key="1">
    <citation type="journal article" date="2004" name="Biochem. Biophys. Res. Commun.">
        <title>Spatio-temporal organization of Vam6P and SNAP on mouse spermatozoa and their involvement in sperm-zona pellucida interactions.</title>
        <authorList>
            <person name="Brahmaraju M."/>
            <person name="Shoeb M."/>
            <person name="Laloraya M."/>
            <person name="Kumar P.G."/>
        </authorList>
    </citation>
    <scope>PROTEIN SEQUENCE</scope>
    <source>
        <tissue>Sperm</tissue>
    </source>
</reference>
<comment type="function">
    <text evidence="2">May play a role in clustering and fusion of late endosomes and lysosomes.</text>
</comment>
<comment type="subunit">
    <text evidence="2">Homooligomer.</text>
</comment>
<comment type="subcellular location">
    <subcellularLocation>
        <location evidence="1">Cytoplasm</location>
    </subcellularLocation>
    <subcellularLocation>
        <location evidence="1">Lysosome membrane</location>
        <topology evidence="1">Peripheral membrane protein</topology>
    </subcellularLocation>
    <subcellularLocation>
        <location evidence="1">Late endosome membrane</location>
        <topology evidence="1">Peripheral membrane protein</topology>
    </subcellularLocation>
</comment>
<dbReference type="InParanoid" id="P83853"/>
<dbReference type="Proteomes" id="UP000000589">
    <property type="component" value="Unplaced"/>
</dbReference>
<dbReference type="GO" id="GO:0031902">
    <property type="term" value="C:late endosome membrane"/>
    <property type="evidence" value="ECO:0007669"/>
    <property type="project" value="UniProtKB-SubCell"/>
</dbReference>
<dbReference type="GO" id="GO:0005765">
    <property type="term" value="C:lysosomal membrane"/>
    <property type="evidence" value="ECO:0007669"/>
    <property type="project" value="UniProtKB-SubCell"/>
</dbReference>
<dbReference type="GO" id="GO:0015031">
    <property type="term" value="P:protein transport"/>
    <property type="evidence" value="ECO:0007669"/>
    <property type="project" value="UniProtKB-KW"/>
</dbReference>
<sequence length="8" mass="1075">EWEEWLLA</sequence>
<keyword id="KW-0963">Cytoplasm</keyword>
<keyword id="KW-0903">Direct protein sequencing</keyword>
<keyword id="KW-0967">Endosome</keyword>
<keyword id="KW-0458">Lysosome</keyword>
<keyword id="KW-0472">Membrane</keyword>
<keyword id="KW-0653">Protein transport</keyword>
<keyword id="KW-1185">Reference proteome</keyword>
<keyword id="KW-0813">Transport</keyword>
<feature type="chain" id="PRO_0000065759" description="Vam6-like protein">
    <location>
        <begin position="1"/>
        <end position="8" status="greater than"/>
    </location>
</feature>
<feature type="non-terminal residue" evidence="3">
    <location>
        <position position="8"/>
    </location>
</feature>